<protein>
    <recommendedName>
        <fullName>Uncharacterized protein in pnp 3'region</fullName>
    </recommendedName>
    <alternativeName>
        <fullName>ORF3</fullName>
    </alternativeName>
</protein>
<reference key="1">
    <citation type="journal article" date="1994" name="J. Bacteriol.">
        <title>The gene coding for polynucleotide phosphorylase in Photorhabdus sp. strain K122 is induced at low temperatures.</title>
        <authorList>
            <person name="Clarke D.J."/>
            <person name="Dowds B.C.A."/>
        </authorList>
    </citation>
    <scope>NUCLEOTIDE SEQUENCE [GENOMIC DNA]</scope>
    <source>
        <strain>K122</strain>
    </source>
</reference>
<dbReference type="EMBL" id="X76069">
    <property type="protein sequence ID" value="CAA53672.1"/>
    <property type="molecule type" value="Genomic_DNA"/>
</dbReference>
<accession>P41122</accession>
<sequence length="13" mass="1634">MNFFLRWCYAVAI</sequence>
<name>YPNP_PHOLU</name>
<feature type="chain" id="PRO_0000066406" description="Uncharacterized protein in pnp 3'region">
    <location>
        <begin position="1"/>
        <end position="13" status="greater than"/>
    </location>
</feature>
<feature type="non-terminal residue">
    <location>
        <position position="13"/>
    </location>
</feature>
<organism>
    <name type="scientific">Photorhabdus luminescens</name>
    <name type="common">Xenorhabdus luminescens</name>
    <dbReference type="NCBI Taxonomy" id="29488"/>
    <lineage>
        <taxon>Bacteria</taxon>
        <taxon>Pseudomonadati</taxon>
        <taxon>Pseudomonadota</taxon>
        <taxon>Gammaproteobacteria</taxon>
        <taxon>Enterobacterales</taxon>
        <taxon>Morganellaceae</taxon>
        <taxon>Photorhabdus</taxon>
    </lineage>
</organism>
<proteinExistence type="predicted"/>